<comment type="function">
    <text evidence="1">Cleaves peptides in various proteins in a process that requires ATP hydrolysis. Has a chymotrypsin-like activity. Plays a major role in the degradation of misfolded proteins.</text>
</comment>
<comment type="catalytic activity">
    <reaction evidence="1">
        <text>Hydrolysis of proteins to small peptides in the presence of ATP and magnesium. alpha-casein is the usual test substrate. In the absence of ATP, only oligopeptides shorter than five residues are hydrolyzed (such as succinyl-Leu-Tyr-|-NHMec, and Leu-Tyr-Leu-|-Tyr-Trp, in which cleavage of the -Tyr-|-Leu- and -Tyr-|-Trp bonds also occurs).</text>
        <dbReference type="EC" id="3.4.21.92"/>
    </reaction>
</comment>
<comment type="subunit">
    <text evidence="1">Fourteen ClpP subunits assemble into 2 heptameric rings which stack back to back to give a disk-like structure with a central cavity, resembling the structure of eukaryotic proteasomes.</text>
</comment>
<comment type="subcellular location">
    <subcellularLocation>
        <location evidence="1">Cytoplasm</location>
    </subcellularLocation>
</comment>
<comment type="similarity">
    <text evidence="1">Belongs to the peptidase S14 family.</text>
</comment>
<evidence type="ECO:0000255" key="1">
    <source>
        <dbReference type="HAMAP-Rule" id="MF_00444"/>
    </source>
</evidence>
<sequence>MHKAPESVLNALVPMVVEQTAKGERSYDIYSRLLKERVIFLVGQVEEHMANLIVAQLLFLESESPDKDIYLYINSPGGSVTAGMAIYDTMQFIKPNVSTVCIGQAASMGAFLLAGGAEGKRHCLPNSRVMIHQPLGGFQGQASDIAIHAQEILGIKNKLNTMLAEHTGQPLEVIERDTDRDNFMSATEAAEYGLVDSVIAKRG</sequence>
<feature type="chain" id="PRO_1000080900" description="ATP-dependent Clp protease proteolytic subunit">
    <location>
        <begin position="1"/>
        <end position="203"/>
    </location>
</feature>
<feature type="active site" description="Nucleophile" evidence="1">
    <location>
        <position position="107"/>
    </location>
</feature>
<feature type="active site" evidence="1">
    <location>
        <position position="132"/>
    </location>
</feature>
<dbReference type="EC" id="3.4.21.92" evidence="1"/>
<dbReference type="EMBL" id="CP000851">
    <property type="protein sequence ID" value="ABV88001.1"/>
    <property type="molecule type" value="Genomic_DNA"/>
</dbReference>
<dbReference type="RefSeq" id="WP_012155907.1">
    <property type="nucleotide sequence ID" value="NC_009901.1"/>
</dbReference>
<dbReference type="SMR" id="A8H614"/>
<dbReference type="STRING" id="398579.Spea_2681"/>
<dbReference type="MEROPS" id="S14.001"/>
<dbReference type="KEGG" id="spl:Spea_2681"/>
<dbReference type="eggNOG" id="COG0740">
    <property type="taxonomic scope" value="Bacteria"/>
</dbReference>
<dbReference type="HOGENOM" id="CLU_058707_3_2_6"/>
<dbReference type="OrthoDB" id="9802800at2"/>
<dbReference type="Proteomes" id="UP000002608">
    <property type="component" value="Chromosome"/>
</dbReference>
<dbReference type="GO" id="GO:0005737">
    <property type="term" value="C:cytoplasm"/>
    <property type="evidence" value="ECO:0007669"/>
    <property type="project" value="UniProtKB-SubCell"/>
</dbReference>
<dbReference type="GO" id="GO:0009368">
    <property type="term" value="C:endopeptidase Clp complex"/>
    <property type="evidence" value="ECO:0007669"/>
    <property type="project" value="TreeGrafter"/>
</dbReference>
<dbReference type="GO" id="GO:0004176">
    <property type="term" value="F:ATP-dependent peptidase activity"/>
    <property type="evidence" value="ECO:0007669"/>
    <property type="project" value="InterPro"/>
</dbReference>
<dbReference type="GO" id="GO:0051117">
    <property type="term" value="F:ATPase binding"/>
    <property type="evidence" value="ECO:0007669"/>
    <property type="project" value="TreeGrafter"/>
</dbReference>
<dbReference type="GO" id="GO:0004252">
    <property type="term" value="F:serine-type endopeptidase activity"/>
    <property type="evidence" value="ECO:0007669"/>
    <property type="project" value="UniProtKB-UniRule"/>
</dbReference>
<dbReference type="GO" id="GO:0006515">
    <property type="term" value="P:protein quality control for misfolded or incompletely synthesized proteins"/>
    <property type="evidence" value="ECO:0007669"/>
    <property type="project" value="TreeGrafter"/>
</dbReference>
<dbReference type="CDD" id="cd07017">
    <property type="entry name" value="S14_ClpP_2"/>
    <property type="match status" value="1"/>
</dbReference>
<dbReference type="FunFam" id="3.90.226.10:FF:000001">
    <property type="entry name" value="ATP-dependent Clp protease proteolytic subunit"/>
    <property type="match status" value="1"/>
</dbReference>
<dbReference type="Gene3D" id="3.90.226.10">
    <property type="entry name" value="2-enoyl-CoA Hydratase, Chain A, domain 1"/>
    <property type="match status" value="1"/>
</dbReference>
<dbReference type="HAMAP" id="MF_00444">
    <property type="entry name" value="ClpP"/>
    <property type="match status" value="1"/>
</dbReference>
<dbReference type="InterPro" id="IPR001907">
    <property type="entry name" value="ClpP"/>
</dbReference>
<dbReference type="InterPro" id="IPR029045">
    <property type="entry name" value="ClpP/crotonase-like_dom_sf"/>
</dbReference>
<dbReference type="InterPro" id="IPR023562">
    <property type="entry name" value="ClpP/TepA"/>
</dbReference>
<dbReference type="InterPro" id="IPR033135">
    <property type="entry name" value="ClpP_His_AS"/>
</dbReference>
<dbReference type="InterPro" id="IPR018215">
    <property type="entry name" value="ClpP_Ser_AS"/>
</dbReference>
<dbReference type="NCBIfam" id="TIGR00493">
    <property type="entry name" value="clpP"/>
    <property type="match status" value="1"/>
</dbReference>
<dbReference type="NCBIfam" id="NF001368">
    <property type="entry name" value="PRK00277.1"/>
    <property type="match status" value="1"/>
</dbReference>
<dbReference type="NCBIfam" id="NF009205">
    <property type="entry name" value="PRK12553.1"/>
    <property type="match status" value="1"/>
</dbReference>
<dbReference type="PANTHER" id="PTHR10381">
    <property type="entry name" value="ATP-DEPENDENT CLP PROTEASE PROTEOLYTIC SUBUNIT"/>
    <property type="match status" value="1"/>
</dbReference>
<dbReference type="PANTHER" id="PTHR10381:SF70">
    <property type="entry name" value="ATP-DEPENDENT CLP PROTEASE PROTEOLYTIC SUBUNIT"/>
    <property type="match status" value="1"/>
</dbReference>
<dbReference type="Pfam" id="PF00574">
    <property type="entry name" value="CLP_protease"/>
    <property type="match status" value="1"/>
</dbReference>
<dbReference type="PRINTS" id="PR00127">
    <property type="entry name" value="CLPPROTEASEP"/>
</dbReference>
<dbReference type="SUPFAM" id="SSF52096">
    <property type="entry name" value="ClpP/crotonase"/>
    <property type="match status" value="1"/>
</dbReference>
<dbReference type="PROSITE" id="PS00382">
    <property type="entry name" value="CLP_PROTEASE_HIS"/>
    <property type="match status" value="1"/>
</dbReference>
<dbReference type="PROSITE" id="PS00381">
    <property type="entry name" value="CLP_PROTEASE_SER"/>
    <property type="match status" value="1"/>
</dbReference>
<name>CLPP_SHEPA</name>
<accession>A8H614</accession>
<gene>
    <name evidence="1" type="primary">clpP</name>
    <name type="ordered locus">Spea_2681</name>
</gene>
<proteinExistence type="inferred from homology"/>
<reference key="1">
    <citation type="submission" date="2007-10" db="EMBL/GenBank/DDBJ databases">
        <title>Complete sequence of Shewanella pealeana ATCC 700345.</title>
        <authorList>
            <consortium name="US DOE Joint Genome Institute"/>
            <person name="Copeland A."/>
            <person name="Lucas S."/>
            <person name="Lapidus A."/>
            <person name="Barry K."/>
            <person name="Glavina del Rio T."/>
            <person name="Dalin E."/>
            <person name="Tice H."/>
            <person name="Pitluck S."/>
            <person name="Chertkov O."/>
            <person name="Brettin T."/>
            <person name="Bruce D."/>
            <person name="Detter J.C."/>
            <person name="Han C."/>
            <person name="Schmutz J."/>
            <person name="Larimer F."/>
            <person name="Land M."/>
            <person name="Hauser L."/>
            <person name="Kyrpides N."/>
            <person name="Kim E."/>
            <person name="Zhao J.-S.Z."/>
            <person name="Manno D."/>
            <person name="Hawari J."/>
            <person name="Richardson P."/>
        </authorList>
    </citation>
    <scope>NUCLEOTIDE SEQUENCE [LARGE SCALE GENOMIC DNA]</scope>
    <source>
        <strain>ATCC 700345 / ANG-SQ1</strain>
    </source>
</reference>
<keyword id="KW-0963">Cytoplasm</keyword>
<keyword id="KW-0378">Hydrolase</keyword>
<keyword id="KW-0645">Protease</keyword>
<keyword id="KW-1185">Reference proteome</keyword>
<keyword id="KW-0720">Serine protease</keyword>
<organism>
    <name type="scientific">Shewanella pealeana (strain ATCC 700345 / ANG-SQ1)</name>
    <dbReference type="NCBI Taxonomy" id="398579"/>
    <lineage>
        <taxon>Bacteria</taxon>
        <taxon>Pseudomonadati</taxon>
        <taxon>Pseudomonadota</taxon>
        <taxon>Gammaproteobacteria</taxon>
        <taxon>Alteromonadales</taxon>
        <taxon>Shewanellaceae</taxon>
        <taxon>Shewanella</taxon>
    </lineage>
</organism>
<protein>
    <recommendedName>
        <fullName evidence="1">ATP-dependent Clp protease proteolytic subunit</fullName>
        <ecNumber evidence="1">3.4.21.92</ecNumber>
    </recommendedName>
    <alternativeName>
        <fullName evidence="1">Endopeptidase Clp</fullName>
    </alternativeName>
</protein>